<evidence type="ECO:0000255" key="1">
    <source>
        <dbReference type="HAMAP-Rule" id="MF_01227"/>
    </source>
</evidence>
<proteinExistence type="inferred from homology"/>
<reference key="1">
    <citation type="journal article" date="2009" name="PLoS Genet.">
        <title>Adaptations to submarine hydrothermal environments exemplified by the genome of Nautilia profundicola.</title>
        <authorList>
            <person name="Campbell B.J."/>
            <person name="Smith J.L."/>
            <person name="Hanson T.E."/>
            <person name="Klotz M.G."/>
            <person name="Stein L.Y."/>
            <person name="Lee C.K."/>
            <person name="Wu D."/>
            <person name="Robinson J.M."/>
            <person name="Khouri H.M."/>
            <person name="Eisen J.A."/>
            <person name="Cary S.C."/>
        </authorList>
    </citation>
    <scope>NUCLEOTIDE SEQUENCE [LARGE SCALE GENOMIC DNA]</scope>
    <source>
        <strain>ATCC BAA-1463 / DSM 18972 / AmH</strain>
    </source>
</reference>
<organism>
    <name type="scientific">Nautilia profundicola (strain ATCC BAA-1463 / DSM 18972 / AmH)</name>
    <dbReference type="NCBI Taxonomy" id="598659"/>
    <lineage>
        <taxon>Bacteria</taxon>
        <taxon>Pseudomonadati</taxon>
        <taxon>Campylobacterota</taxon>
        <taxon>Epsilonproteobacteria</taxon>
        <taxon>Nautiliales</taxon>
        <taxon>Nautiliaceae</taxon>
        <taxon>Nautilia</taxon>
    </lineage>
</organism>
<feature type="chain" id="PRO_1000164954" description="CTP synthase">
    <location>
        <begin position="1"/>
        <end position="545"/>
    </location>
</feature>
<feature type="domain" description="Glutamine amidotransferase type-1" evidence="1">
    <location>
        <begin position="290"/>
        <end position="544"/>
    </location>
</feature>
<feature type="region of interest" description="Amidoligase domain" evidence="1">
    <location>
        <begin position="1"/>
        <end position="265"/>
    </location>
</feature>
<feature type="active site" description="Nucleophile; for glutamine hydrolysis" evidence="1">
    <location>
        <position position="382"/>
    </location>
</feature>
<feature type="active site" evidence="1">
    <location>
        <position position="517"/>
    </location>
</feature>
<feature type="active site" evidence="1">
    <location>
        <position position="519"/>
    </location>
</feature>
<feature type="binding site" evidence="1">
    <location>
        <position position="13"/>
    </location>
    <ligand>
        <name>CTP</name>
        <dbReference type="ChEBI" id="CHEBI:37563"/>
        <note>allosteric inhibitor</note>
    </ligand>
</feature>
<feature type="binding site" evidence="1">
    <location>
        <position position="13"/>
    </location>
    <ligand>
        <name>UTP</name>
        <dbReference type="ChEBI" id="CHEBI:46398"/>
    </ligand>
</feature>
<feature type="binding site" evidence="1">
    <location>
        <begin position="14"/>
        <end position="19"/>
    </location>
    <ligand>
        <name>ATP</name>
        <dbReference type="ChEBI" id="CHEBI:30616"/>
    </ligand>
</feature>
<feature type="binding site" evidence="1">
    <location>
        <position position="71"/>
    </location>
    <ligand>
        <name>ATP</name>
        <dbReference type="ChEBI" id="CHEBI:30616"/>
    </ligand>
</feature>
<feature type="binding site" evidence="1">
    <location>
        <position position="71"/>
    </location>
    <ligand>
        <name>Mg(2+)</name>
        <dbReference type="ChEBI" id="CHEBI:18420"/>
    </ligand>
</feature>
<feature type="binding site" evidence="1">
    <location>
        <position position="139"/>
    </location>
    <ligand>
        <name>Mg(2+)</name>
        <dbReference type="ChEBI" id="CHEBI:18420"/>
    </ligand>
</feature>
<feature type="binding site" evidence="1">
    <location>
        <begin position="146"/>
        <end position="148"/>
    </location>
    <ligand>
        <name>CTP</name>
        <dbReference type="ChEBI" id="CHEBI:37563"/>
        <note>allosteric inhibitor</note>
    </ligand>
</feature>
<feature type="binding site" evidence="1">
    <location>
        <begin position="186"/>
        <end position="191"/>
    </location>
    <ligand>
        <name>CTP</name>
        <dbReference type="ChEBI" id="CHEBI:37563"/>
        <note>allosteric inhibitor</note>
    </ligand>
</feature>
<feature type="binding site" evidence="1">
    <location>
        <begin position="186"/>
        <end position="191"/>
    </location>
    <ligand>
        <name>UTP</name>
        <dbReference type="ChEBI" id="CHEBI:46398"/>
    </ligand>
</feature>
<feature type="binding site" evidence="1">
    <location>
        <position position="222"/>
    </location>
    <ligand>
        <name>CTP</name>
        <dbReference type="ChEBI" id="CHEBI:37563"/>
        <note>allosteric inhibitor</note>
    </ligand>
</feature>
<feature type="binding site" evidence="1">
    <location>
        <position position="222"/>
    </location>
    <ligand>
        <name>UTP</name>
        <dbReference type="ChEBI" id="CHEBI:46398"/>
    </ligand>
</feature>
<feature type="binding site" evidence="1">
    <location>
        <position position="355"/>
    </location>
    <ligand>
        <name>L-glutamine</name>
        <dbReference type="ChEBI" id="CHEBI:58359"/>
    </ligand>
</feature>
<feature type="binding site" evidence="1">
    <location>
        <begin position="383"/>
        <end position="386"/>
    </location>
    <ligand>
        <name>L-glutamine</name>
        <dbReference type="ChEBI" id="CHEBI:58359"/>
    </ligand>
</feature>
<feature type="binding site" evidence="1">
    <location>
        <position position="406"/>
    </location>
    <ligand>
        <name>L-glutamine</name>
        <dbReference type="ChEBI" id="CHEBI:58359"/>
    </ligand>
</feature>
<feature type="binding site" evidence="1">
    <location>
        <position position="473"/>
    </location>
    <ligand>
        <name>L-glutamine</name>
        <dbReference type="ChEBI" id="CHEBI:58359"/>
    </ligand>
</feature>
<name>PYRG_NAUPA</name>
<comment type="function">
    <text evidence="1">Catalyzes the ATP-dependent amination of UTP to CTP with either L-glutamine or ammonia as the source of nitrogen. Regulates intracellular CTP levels through interactions with the four ribonucleotide triphosphates.</text>
</comment>
<comment type="catalytic activity">
    <reaction evidence="1">
        <text>UTP + L-glutamine + ATP + H2O = CTP + L-glutamate + ADP + phosphate + 2 H(+)</text>
        <dbReference type="Rhea" id="RHEA:26426"/>
        <dbReference type="ChEBI" id="CHEBI:15377"/>
        <dbReference type="ChEBI" id="CHEBI:15378"/>
        <dbReference type="ChEBI" id="CHEBI:29985"/>
        <dbReference type="ChEBI" id="CHEBI:30616"/>
        <dbReference type="ChEBI" id="CHEBI:37563"/>
        <dbReference type="ChEBI" id="CHEBI:43474"/>
        <dbReference type="ChEBI" id="CHEBI:46398"/>
        <dbReference type="ChEBI" id="CHEBI:58359"/>
        <dbReference type="ChEBI" id="CHEBI:456216"/>
        <dbReference type="EC" id="6.3.4.2"/>
    </reaction>
</comment>
<comment type="catalytic activity">
    <reaction evidence="1">
        <text>L-glutamine + H2O = L-glutamate + NH4(+)</text>
        <dbReference type="Rhea" id="RHEA:15889"/>
        <dbReference type="ChEBI" id="CHEBI:15377"/>
        <dbReference type="ChEBI" id="CHEBI:28938"/>
        <dbReference type="ChEBI" id="CHEBI:29985"/>
        <dbReference type="ChEBI" id="CHEBI:58359"/>
    </reaction>
</comment>
<comment type="catalytic activity">
    <reaction evidence="1">
        <text>UTP + NH4(+) + ATP = CTP + ADP + phosphate + 2 H(+)</text>
        <dbReference type="Rhea" id="RHEA:16597"/>
        <dbReference type="ChEBI" id="CHEBI:15378"/>
        <dbReference type="ChEBI" id="CHEBI:28938"/>
        <dbReference type="ChEBI" id="CHEBI:30616"/>
        <dbReference type="ChEBI" id="CHEBI:37563"/>
        <dbReference type="ChEBI" id="CHEBI:43474"/>
        <dbReference type="ChEBI" id="CHEBI:46398"/>
        <dbReference type="ChEBI" id="CHEBI:456216"/>
    </reaction>
</comment>
<comment type="activity regulation">
    <text evidence="1">Allosterically activated by GTP, when glutamine is the substrate; GTP has no effect on the reaction when ammonia is the substrate. The allosteric effector GTP functions by stabilizing the protein conformation that binds the tetrahedral intermediate(s) formed during glutamine hydrolysis. Inhibited by the product CTP, via allosteric rather than competitive inhibition.</text>
</comment>
<comment type="pathway">
    <text evidence="1">Pyrimidine metabolism; CTP biosynthesis via de novo pathway; CTP from UDP: step 2/2.</text>
</comment>
<comment type="subunit">
    <text evidence="1">Homotetramer.</text>
</comment>
<comment type="miscellaneous">
    <text evidence="1">CTPSs have evolved a hybrid strategy for distinguishing between UTP and CTP. The overlapping regions of the product feedback inhibitory and substrate sites recognize a common feature in both compounds, the triphosphate moiety. To differentiate isosteric substrate and product pyrimidine rings, an additional pocket far from the expected kinase/ligase catalytic site, specifically recognizes the cytosine and ribose portions of the product inhibitor.</text>
</comment>
<comment type="similarity">
    <text evidence="1">Belongs to the CTP synthase family.</text>
</comment>
<gene>
    <name evidence="1" type="primary">pyrG</name>
    <name type="ordered locus">NAMH_0253</name>
</gene>
<dbReference type="EC" id="6.3.4.2" evidence="1"/>
<dbReference type="EMBL" id="CP001279">
    <property type="protein sequence ID" value="ACM93537.1"/>
    <property type="molecule type" value="Genomic_DNA"/>
</dbReference>
<dbReference type="RefSeq" id="WP_015902589.1">
    <property type="nucleotide sequence ID" value="NC_012115.1"/>
</dbReference>
<dbReference type="SMR" id="B9L7R9"/>
<dbReference type="STRING" id="598659.NAMH_0253"/>
<dbReference type="MEROPS" id="C26.964"/>
<dbReference type="KEGG" id="nam:NAMH_0253"/>
<dbReference type="eggNOG" id="COG0504">
    <property type="taxonomic scope" value="Bacteria"/>
</dbReference>
<dbReference type="HOGENOM" id="CLU_011675_5_0_7"/>
<dbReference type="OrthoDB" id="9801107at2"/>
<dbReference type="UniPathway" id="UPA00159">
    <property type="reaction ID" value="UER00277"/>
</dbReference>
<dbReference type="Proteomes" id="UP000000448">
    <property type="component" value="Chromosome"/>
</dbReference>
<dbReference type="GO" id="GO:0005829">
    <property type="term" value="C:cytosol"/>
    <property type="evidence" value="ECO:0007669"/>
    <property type="project" value="TreeGrafter"/>
</dbReference>
<dbReference type="GO" id="GO:0005524">
    <property type="term" value="F:ATP binding"/>
    <property type="evidence" value="ECO:0007669"/>
    <property type="project" value="UniProtKB-KW"/>
</dbReference>
<dbReference type="GO" id="GO:0003883">
    <property type="term" value="F:CTP synthase activity"/>
    <property type="evidence" value="ECO:0007669"/>
    <property type="project" value="UniProtKB-UniRule"/>
</dbReference>
<dbReference type="GO" id="GO:0004359">
    <property type="term" value="F:glutaminase activity"/>
    <property type="evidence" value="ECO:0007669"/>
    <property type="project" value="RHEA"/>
</dbReference>
<dbReference type="GO" id="GO:0042802">
    <property type="term" value="F:identical protein binding"/>
    <property type="evidence" value="ECO:0007669"/>
    <property type="project" value="TreeGrafter"/>
</dbReference>
<dbReference type="GO" id="GO:0046872">
    <property type="term" value="F:metal ion binding"/>
    <property type="evidence" value="ECO:0007669"/>
    <property type="project" value="UniProtKB-KW"/>
</dbReference>
<dbReference type="GO" id="GO:0044210">
    <property type="term" value="P:'de novo' CTP biosynthetic process"/>
    <property type="evidence" value="ECO:0007669"/>
    <property type="project" value="UniProtKB-UniRule"/>
</dbReference>
<dbReference type="GO" id="GO:0019856">
    <property type="term" value="P:pyrimidine nucleobase biosynthetic process"/>
    <property type="evidence" value="ECO:0007669"/>
    <property type="project" value="TreeGrafter"/>
</dbReference>
<dbReference type="CDD" id="cd03113">
    <property type="entry name" value="CTPS_N"/>
    <property type="match status" value="1"/>
</dbReference>
<dbReference type="CDD" id="cd01746">
    <property type="entry name" value="GATase1_CTP_Synthase"/>
    <property type="match status" value="1"/>
</dbReference>
<dbReference type="FunFam" id="3.40.50.300:FF:000009">
    <property type="entry name" value="CTP synthase"/>
    <property type="match status" value="1"/>
</dbReference>
<dbReference type="FunFam" id="3.40.50.880:FF:000002">
    <property type="entry name" value="CTP synthase"/>
    <property type="match status" value="1"/>
</dbReference>
<dbReference type="Gene3D" id="3.40.50.880">
    <property type="match status" value="1"/>
</dbReference>
<dbReference type="Gene3D" id="3.40.50.300">
    <property type="entry name" value="P-loop containing nucleotide triphosphate hydrolases"/>
    <property type="match status" value="1"/>
</dbReference>
<dbReference type="HAMAP" id="MF_01227">
    <property type="entry name" value="PyrG"/>
    <property type="match status" value="1"/>
</dbReference>
<dbReference type="InterPro" id="IPR029062">
    <property type="entry name" value="Class_I_gatase-like"/>
</dbReference>
<dbReference type="InterPro" id="IPR004468">
    <property type="entry name" value="CTP_synthase"/>
</dbReference>
<dbReference type="InterPro" id="IPR017456">
    <property type="entry name" value="CTP_synthase_N"/>
</dbReference>
<dbReference type="InterPro" id="IPR017926">
    <property type="entry name" value="GATASE"/>
</dbReference>
<dbReference type="InterPro" id="IPR033828">
    <property type="entry name" value="GATase1_CTP_Synthase"/>
</dbReference>
<dbReference type="InterPro" id="IPR027417">
    <property type="entry name" value="P-loop_NTPase"/>
</dbReference>
<dbReference type="NCBIfam" id="NF003792">
    <property type="entry name" value="PRK05380.1"/>
    <property type="match status" value="1"/>
</dbReference>
<dbReference type="NCBIfam" id="TIGR00337">
    <property type="entry name" value="PyrG"/>
    <property type="match status" value="1"/>
</dbReference>
<dbReference type="PANTHER" id="PTHR11550">
    <property type="entry name" value="CTP SYNTHASE"/>
    <property type="match status" value="1"/>
</dbReference>
<dbReference type="PANTHER" id="PTHR11550:SF0">
    <property type="entry name" value="CTP SYNTHASE-RELATED"/>
    <property type="match status" value="1"/>
</dbReference>
<dbReference type="Pfam" id="PF06418">
    <property type="entry name" value="CTP_synth_N"/>
    <property type="match status" value="1"/>
</dbReference>
<dbReference type="Pfam" id="PF00117">
    <property type="entry name" value="GATase"/>
    <property type="match status" value="1"/>
</dbReference>
<dbReference type="SUPFAM" id="SSF52317">
    <property type="entry name" value="Class I glutamine amidotransferase-like"/>
    <property type="match status" value="1"/>
</dbReference>
<dbReference type="SUPFAM" id="SSF52540">
    <property type="entry name" value="P-loop containing nucleoside triphosphate hydrolases"/>
    <property type="match status" value="1"/>
</dbReference>
<dbReference type="PROSITE" id="PS51273">
    <property type="entry name" value="GATASE_TYPE_1"/>
    <property type="match status" value="1"/>
</dbReference>
<sequence length="545" mass="61000">MSKYIFVTGGVLSSLGKGITSASIATLLQHSGFKVSMVKIDPYINVDPGTMSPFEHGEVFVTEDGAETDLDIGNYERFLNTNLGKKNNFTTGQIYLSVIEKERRGDYLGKTVQIIPHITDEIKRRIKEVAKDVDIVVVELGGTVGDIEGLPFLEAVRQLKHEVGKTNAMFVHVTLIPYIKAAGELKTKPTQHSVQELRRIGITPHMLVCRTEKPLPKALKEKLADSCDIERDAVIEAVDAPTVYQVPLNFLNQDILVPIAKQLDLGDLHPDMTEWNFIVKKIISPQKSVKIAFVGKYLQLKESYKSLIEALIHSGAHLDMKVDIEWIDSEDLEKADDEKLDEIFNEVSGILVAGGFGERGVEGKLKAIKYARENKIPYLGICLGMQLAVIEFARNVLGLEYANSQEFDPDTPEPVVYLIDEFIDASGQKQLRTHKSPLGGTMRLGGYECFVKKGTKLYDAYKSDKVIERHRHRYEVNGAYEDALKEKGMIVSGKSVEGLVEAVELKDHPWFVAVQFHPEFTNKLKSPNKVIMSFVENAYKCQRSC</sequence>
<keyword id="KW-0067">ATP-binding</keyword>
<keyword id="KW-0315">Glutamine amidotransferase</keyword>
<keyword id="KW-0436">Ligase</keyword>
<keyword id="KW-0460">Magnesium</keyword>
<keyword id="KW-0479">Metal-binding</keyword>
<keyword id="KW-0547">Nucleotide-binding</keyword>
<keyword id="KW-0665">Pyrimidine biosynthesis</keyword>
<protein>
    <recommendedName>
        <fullName evidence="1">CTP synthase</fullName>
        <ecNumber evidence="1">6.3.4.2</ecNumber>
    </recommendedName>
    <alternativeName>
        <fullName evidence="1">Cytidine 5'-triphosphate synthase</fullName>
    </alternativeName>
    <alternativeName>
        <fullName evidence="1">Cytidine triphosphate synthetase</fullName>
        <shortName evidence="1">CTP synthetase</shortName>
        <shortName evidence="1">CTPS</shortName>
    </alternativeName>
    <alternativeName>
        <fullName evidence="1">UTP--ammonia ligase</fullName>
    </alternativeName>
</protein>
<accession>B9L7R9</accession>